<protein>
    <recommendedName>
        <fullName evidence="1">FMN-dependent NADH:quinone oxidoreductase</fullName>
        <ecNumber evidence="1">1.6.5.-</ecNumber>
    </recommendedName>
    <alternativeName>
        <fullName evidence="1">Azo-dye reductase</fullName>
    </alternativeName>
    <alternativeName>
        <fullName evidence="1">FMN-dependent NADH-azo compound oxidoreductase</fullName>
    </alternativeName>
    <alternativeName>
        <fullName evidence="1">FMN-dependent NADH-azoreductase</fullName>
        <ecNumber evidence="1">1.7.1.17</ecNumber>
    </alternativeName>
</protein>
<dbReference type="EC" id="1.6.5.-" evidence="1"/>
<dbReference type="EC" id="1.7.1.17" evidence="1"/>
<dbReference type="EMBL" id="CP000946">
    <property type="protein sequence ID" value="ACA77883.1"/>
    <property type="molecule type" value="Genomic_DNA"/>
</dbReference>
<dbReference type="RefSeq" id="WP_000048950.1">
    <property type="nucleotide sequence ID" value="NZ_MTFT01000039.1"/>
</dbReference>
<dbReference type="SMR" id="B1ISN3"/>
<dbReference type="KEGG" id="ecl:EcolC_2246"/>
<dbReference type="HOGENOM" id="CLU_088964_0_0_6"/>
<dbReference type="GO" id="GO:0009055">
    <property type="term" value="F:electron transfer activity"/>
    <property type="evidence" value="ECO:0007669"/>
    <property type="project" value="UniProtKB-UniRule"/>
</dbReference>
<dbReference type="GO" id="GO:0010181">
    <property type="term" value="F:FMN binding"/>
    <property type="evidence" value="ECO:0007669"/>
    <property type="project" value="UniProtKB-UniRule"/>
</dbReference>
<dbReference type="GO" id="GO:0016652">
    <property type="term" value="F:oxidoreductase activity, acting on NAD(P)H as acceptor"/>
    <property type="evidence" value="ECO:0007669"/>
    <property type="project" value="UniProtKB-UniRule"/>
</dbReference>
<dbReference type="GO" id="GO:0016655">
    <property type="term" value="F:oxidoreductase activity, acting on NAD(P)H, quinone or similar compound as acceptor"/>
    <property type="evidence" value="ECO:0007669"/>
    <property type="project" value="InterPro"/>
</dbReference>
<dbReference type="FunFam" id="3.40.50.360:FF:000010">
    <property type="entry name" value="FMN-dependent NADH-azoreductase"/>
    <property type="match status" value="1"/>
</dbReference>
<dbReference type="Gene3D" id="3.40.50.360">
    <property type="match status" value="1"/>
</dbReference>
<dbReference type="HAMAP" id="MF_01216">
    <property type="entry name" value="Azoreductase_type1"/>
    <property type="match status" value="1"/>
</dbReference>
<dbReference type="InterPro" id="IPR003680">
    <property type="entry name" value="Flavodoxin_fold"/>
</dbReference>
<dbReference type="InterPro" id="IPR029039">
    <property type="entry name" value="Flavoprotein-like_sf"/>
</dbReference>
<dbReference type="InterPro" id="IPR050104">
    <property type="entry name" value="FMN-dep_NADH:Q_OxRdtase_AzoR1"/>
</dbReference>
<dbReference type="InterPro" id="IPR023048">
    <property type="entry name" value="NADH:quinone_OxRdtase_FMN_depd"/>
</dbReference>
<dbReference type="PANTHER" id="PTHR43741">
    <property type="entry name" value="FMN-DEPENDENT NADH-AZOREDUCTASE 1"/>
    <property type="match status" value="1"/>
</dbReference>
<dbReference type="PANTHER" id="PTHR43741:SF2">
    <property type="entry name" value="FMN-DEPENDENT NADH:QUINONE OXIDOREDUCTASE"/>
    <property type="match status" value="1"/>
</dbReference>
<dbReference type="Pfam" id="PF02525">
    <property type="entry name" value="Flavodoxin_2"/>
    <property type="match status" value="1"/>
</dbReference>
<dbReference type="SUPFAM" id="SSF52218">
    <property type="entry name" value="Flavoproteins"/>
    <property type="match status" value="1"/>
</dbReference>
<accession>B1ISN3</accession>
<sequence length="201" mass="21658">MSKVLVLKSSILAGYSQSNQLSDYFVEQWREKHSADEITVRDLAANPIPVLDGELVGALRPSDAPLTPRQQEALALSDELIAELKAHDVIVIAAPMYNFNISTQLKNYFDLVARAGVTFRYTENGPEGLVTGKKAIVITSRGGIHKDGPTDLVTPYLSTFLGFIGITDVKFVFAEGIAYGPEMAAKAQSDAKAAIDSIVSA</sequence>
<name>AZOR_ECOLC</name>
<proteinExistence type="inferred from homology"/>
<feature type="chain" id="PRO_1000085581" description="FMN-dependent NADH:quinone oxidoreductase">
    <location>
        <begin position="1"/>
        <end position="201"/>
    </location>
</feature>
<feature type="binding site" evidence="1">
    <location>
        <position position="10"/>
    </location>
    <ligand>
        <name>FMN</name>
        <dbReference type="ChEBI" id="CHEBI:58210"/>
    </ligand>
</feature>
<feature type="binding site" evidence="1">
    <location>
        <begin position="16"/>
        <end position="18"/>
    </location>
    <ligand>
        <name>FMN</name>
        <dbReference type="ChEBI" id="CHEBI:58210"/>
    </ligand>
</feature>
<feature type="binding site" evidence="1">
    <location>
        <begin position="96"/>
        <end position="99"/>
    </location>
    <ligand>
        <name>FMN</name>
        <dbReference type="ChEBI" id="CHEBI:58210"/>
    </ligand>
</feature>
<feature type="binding site" evidence="1">
    <location>
        <begin position="140"/>
        <end position="143"/>
    </location>
    <ligand>
        <name>FMN</name>
        <dbReference type="ChEBI" id="CHEBI:58210"/>
    </ligand>
</feature>
<reference key="1">
    <citation type="submission" date="2008-02" db="EMBL/GenBank/DDBJ databases">
        <title>Complete sequence of Escherichia coli C str. ATCC 8739.</title>
        <authorList>
            <person name="Copeland A."/>
            <person name="Lucas S."/>
            <person name="Lapidus A."/>
            <person name="Glavina del Rio T."/>
            <person name="Dalin E."/>
            <person name="Tice H."/>
            <person name="Bruce D."/>
            <person name="Goodwin L."/>
            <person name="Pitluck S."/>
            <person name="Kiss H."/>
            <person name="Brettin T."/>
            <person name="Detter J.C."/>
            <person name="Han C."/>
            <person name="Kuske C.R."/>
            <person name="Schmutz J."/>
            <person name="Larimer F."/>
            <person name="Land M."/>
            <person name="Hauser L."/>
            <person name="Kyrpides N."/>
            <person name="Mikhailova N."/>
            <person name="Ingram L."/>
            <person name="Richardson P."/>
        </authorList>
    </citation>
    <scope>NUCLEOTIDE SEQUENCE [LARGE SCALE GENOMIC DNA]</scope>
    <source>
        <strain>ATCC 8739 / DSM 1576 / NBRC 3972 / NCIMB 8545 / WDCM 00012 / Crooks</strain>
    </source>
</reference>
<organism>
    <name type="scientific">Escherichia coli (strain ATCC 8739 / DSM 1576 / NBRC 3972 / NCIMB 8545 / WDCM 00012 / Crooks)</name>
    <dbReference type="NCBI Taxonomy" id="481805"/>
    <lineage>
        <taxon>Bacteria</taxon>
        <taxon>Pseudomonadati</taxon>
        <taxon>Pseudomonadota</taxon>
        <taxon>Gammaproteobacteria</taxon>
        <taxon>Enterobacterales</taxon>
        <taxon>Enterobacteriaceae</taxon>
        <taxon>Escherichia</taxon>
    </lineage>
</organism>
<gene>
    <name evidence="1" type="primary">azoR</name>
    <name type="ordered locus">EcolC_2246</name>
</gene>
<evidence type="ECO:0000255" key="1">
    <source>
        <dbReference type="HAMAP-Rule" id="MF_01216"/>
    </source>
</evidence>
<keyword id="KW-0285">Flavoprotein</keyword>
<keyword id="KW-0288">FMN</keyword>
<keyword id="KW-0520">NAD</keyword>
<keyword id="KW-0560">Oxidoreductase</keyword>
<comment type="function">
    <text evidence="1">Quinone reductase that provides resistance to thiol-specific stress caused by electrophilic quinones.</text>
</comment>
<comment type="function">
    <text evidence="1">Also exhibits azoreductase activity. Catalyzes the reductive cleavage of the azo bond in aromatic azo compounds to the corresponding amines.</text>
</comment>
<comment type="catalytic activity">
    <reaction evidence="1">
        <text>2 a quinone + NADH + H(+) = 2 a 1,4-benzosemiquinone + NAD(+)</text>
        <dbReference type="Rhea" id="RHEA:65952"/>
        <dbReference type="ChEBI" id="CHEBI:15378"/>
        <dbReference type="ChEBI" id="CHEBI:57540"/>
        <dbReference type="ChEBI" id="CHEBI:57945"/>
        <dbReference type="ChEBI" id="CHEBI:132124"/>
        <dbReference type="ChEBI" id="CHEBI:134225"/>
    </reaction>
</comment>
<comment type="catalytic activity">
    <reaction evidence="1">
        <text>N,N-dimethyl-1,4-phenylenediamine + anthranilate + 2 NAD(+) = 2-(4-dimethylaminophenyl)diazenylbenzoate + 2 NADH + 2 H(+)</text>
        <dbReference type="Rhea" id="RHEA:55872"/>
        <dbReference type="ChEBI" id="CHEBI:15378"/>
        <dbReference type="ChEBI" id="CHEBI:15783"/>
        <dbReference type="ChEBI" id="CHEBI:16567"/>
        <dbReference type="ChEBI" id="CHEBI:57540"/>
        <dbReference type="ChEBI" id="CHEBI:57945"/>
        <dbReference type="ChEBI" id="CHEBI:71579"/>
        <dbReference type="EC" id="1.7.1.17"/>
    </reaction>
</comment>
<comment type="cofactor">
    <cofactor evidence="1">
        <name>FMN</name>
        <dbReference type="ChEBI" id="CHEBI:58210"/>
    </cofactor>
    <text evidence="1">Binds 1 FMN per subunit.</text>
</comment>
<comment type="subunit">
    <text evidence="1">Homodimer.</text>
</comment>
<comment type="similarity">
    <text evidence="1">Belongs to the azoreductase type 1 family.</text>
</comment>